<proteinExistence type="inferred from homology"/>
<organism>
    <name type="scientific">Aliivibrio salmonicida (strain LFI1238)</name>
    <name type="common">Vibrio salmonicida (strain LFI1238)</name>
    <dbReference type="NCBI Taxonomy" id="316275"/>
    <lineage>
        <taxon>Bacteria</taxon>
        <taxon>Pseudomonadati</taxon>
        <taxon>Pseudomonadota</taxon>
        <taxon>Gammaproteobacteria</taxon>
        <taxon>Vibrionales</taxon>
        <taxon>Vibrionaceae</taxon>
        <taxon>Aliivibrio</taxon>
    </lineage>
</organism>
<dbReference type="EMBL" id="FM178379">
    <property type="protein sequence ID" value="CAQ80111.1"/>
    <property type="molecule type" value="Genomic_DNA"/>
</dbReference>
<dbReference type="RefSeq" id="WP_012550915.1">
    <property type="nucleotide sequence ID" value="NC_011312.1"/>
</dbReference>
<dbReference type="SMR" id="B6EK57"/>
<dbReference type="KEGG" id="vsa:VSAL_I2427"/>
<dbReference type="eggNOG" id="COG0052">
    <property type="taxonomic scope" value="Bacteria"/>
</dbReference>
<dbReference type="HOGENOM" id="CLU_040318_1_2_6"/>
<dbReference type="Proteomes" id="UP000001730">
    <property type="component" value="Chromosome 1"/>
</dbReference>
<dbReference type="GO" id="GO:0022627">
    <property type="term" value="C:cytosolic small ribosomal subunit"/>
    <property type="evidence" value="ECO:0007669"/>
    <property type="project" value="TreeGrafter"/>
</dbReference>
<dbReference type="GO" id="GO:0003735">
    <property type="term" value="F:structural constituent of ribosome"/>
    <property type="evidence" value="ECO:0007669"/>
    <property type="project" value="InterPro"/>
</dbReference>
<dbReference type="GO" id="GO:0006412">
    <property type="term" value="P:translation"/>
    <property type="evidence" value="ECO:0007669"/>
    <property type="project" value="UniProtKB-UniRule"/>
</dbReference>
<dbReference type="CDD" id="cd01425">
    <property type="entry name" value="RPS2"/>
    <property type="match status" value="1"/>
</dbReference>
<dbReference type="FunFam" id="1.10.287.610:FF:000001">
    <property type="entry name" value="30S ribosomal protein S2"/>
    <property type="match status" value="1"/>
</dbReference>
<dbReference type="Gene3D" id="3.40.50.10490">
    <property type="entry name" value="Glucose-6-phosphate isomerase like protein, domain 1"/>
    <property type="match status" value="1"/>
</dbReference>
<dbReference type="Gene3D" id="1.10.287.610">
    <property type="entry name" value="Helix hairpin bin"/>
    <property type="match status" value="1"/>
</dbReference>
<dbReference type="HAMAP" id="MF_00291_B">
    <property type="entry name" value="Ribosomal_uS2_B"/>
    <property type="match status" value="1"/>
</dbReference>
<dbReference type="InterPro" id="IPR001865">
    <property type="entry name" value="Ribosomal_uS2"/>
</dbReference>
<dbReference type="InterPro" id="IPR005706">
    <property type="entry name" value="Ribosomal_uS2_bac/mit/plastid"/>
</dbReference>
<dbReference type="InterPro" id="IPR018130">
    <property type="entry name" value="Ribosomal_uS2_CS"/>
</dbReference>
<dbReference type="InterPro" id="IPR023591">
    <property type="entry name" value="Ribosomal_uS2_flav_dom_sf"/>
</dbReference>
<dbReference type="NCBIfam" id="TIGR01011">
    <property type="entry name" value="rpsB_bact"/>
    <property type="match status" value="1"/>
</dbReference>
<dbReference type="PANTHER" id="PTHR12534">
    <property type="entry name" value="30S RIBOSOMAL PROTEIN S2 PROKARYOTIC AND ORGANELLAR"/>
    <property type="match status" value="1"/>
</dbReference>
<dbReference type="PANTHER" id="PTHR12534:SF0">
    <property type="entry name" value="SMALL RIBOSOMAL SUBUNIT PROTEIN US2M"/>
    <property type="match status" value="1"/>
</dbReference>
<dbReference type="Pfam" id="PF00318">
    <property type="entry name" value="Ribosomal_S2"/>
    <property type="match status" value="1"/>
</dbReference>
<dbReference type="PRINTS" id="PR00395">
    <property type="entry name" value="RIBOSOMALS2"/>
</dbReference>
<dbReference type="SUPFAM" id="SSF52313">
    <property type="entry name" value="Ribosomal protein S2"/>
    <property type="match status" value="1"/>
</dbReference>
<dbReference type="PROSITE" id="PS00962">
    <property type="entry name" value="RIBOSOMAL_S2_1"/>
    <property type="match status" value="1"/>
</dbReference>
<dbReference type="PROSITE" id="PS00963">
    <property type="entry name" value="RIBOSOMAL_S2_2"/>
    <property type="match status" value="1"/>
</dbReference>
<protein>
    <recommendedName>
        <fullName evidence="1">Small ribosomal subunit protein uS2</fullName>
    </recommendedName>
    <alternativeName>
        <fullName evidence="2">30S ribosomal protein S2</fullName>
    </alternativeName>
</protein>
<keyword id="KW-0687">Ribonucleoprotein</keyword>
<keyword id="KW-0689">Ribosomal protein</keyword>
<accession>B6EK57</accession>
<evidence type="ECO:0000255" key="1">
    <source>
        <dbReference type="HAMAP-Rule" id="MF_00291"/>
    </source>
</evidence>
<evidence type="ECO:0000305" key="2"/>
<reference key="1">
    <citation type="journal article" date="2008" name="BMC Genomics">
        <title>The genome sequence of the fish pathogen Aliivibrio salmonicida strain LFI1238 shows extensive evidence of gene decay.</title>
        <authorList>
            <person name="Hjerde E."/>
            <person name="Lorentzen M.S."/>
            <person name="Holden M.T."/>
            <person name="Seeger K."/>
            <person name="Paulsen S."/>
            <person name="Bason N."/>
            <person name="Churcher C."/>
            <person name="Harris D."/>
            <person name="Norbertczak H."/>
            <person name="Quail M.A."/>
            <person name="Sanders S."/>
            <person name="Thurston S."/>
            <person name="Parkhill J."/>
            <person name="Willassen N.P."/>
            <person name="Thomson N.R."/>
        </authorList>
    </citation>
    <scope>NUCLEOTIDE SEQUENCE [LARGE SCALE GENOMIC DNA]</scope>
    <source>
        <strain>LFI1238</strain>
    </source>
</reference>
<gene>
    <name evidence="1" type="primary">rpsB</name>
    <name type="ordered locus">VSAL_I2427</name>
</gene>
<name>RS2_ALISL</name>
<sequence>MATVSMRDMLKAGVHFGHQTRYWNPKMKPFIFGARNKVHIINLEKTVPMFNEALAELAKIGNKKGKVLFVGTKRAASEAVKEAAINSDQYYVNNRWLGGMLTNFKTVRQSIKRLKEYEVQAQDGTFEQITKKEALMRTRSMEKLEKSLGGIKNMNGLPDALFVIDADHEHIAVKEANNLGIPVFAVVDTNSNPDGVDYIIPGNDDAIRAIQLYLNAAADSVKSGRNQDVAAAVAEKDGFVEAE</sequence>
<feature type="chain" id="PRO_1000114987" description="Small ribosomal subunit protein uS2">
    <location>
        <begin position="1"/>
        <end position="243"/>
    </location>
</feature>
<comment type="similarity">
    <text evidence="1">Belongs to the universal ribosomal protein uS2 family.</text>
</comment>